<gene>
    <name evidence="5" type="primary">DTX51</name>
    <name evidence="8" type="synonym">ABS3</name>
    <name evidence="7" type="synonym">ADP1</name>
    <name evidence="6" type="synonym">ADS1</name>
    <name evidence="12" type="synonym">NIC4</name>
    <name evidence="11" type="ordered locus">At4g29140</name>
    <name evidence="13" type="ORF">F19B15.170</name>
</gene>
<protein>
    <recommendedName>
        <fullName evidence="5">Protein DETOXIFICATION 51</fullName>
        <shortName evidence="5">AtDTX51</shortName>
    </recommendedName>
    <alternativeName>
        <fullName evidence="10">Multidrug and toxic compound extrusion protein 51</fullName>
        <shortName evidence="10">MATE protein 51</shortName>
    </alternativeName>
    <alternativeName>
        <fullName evidence="8">Protein ABNORMAL SHOOT 3</fullName>
    </alternativeName>
    <alternativeName>
        <fullName evidence="6">Protein ACTIVATED DISEASE SUSCEPTIBILITY 1</fullName>
        <shortName evidence="6">Protein ADS1</shortName>
    </alternativeName>
    <alternativeName>
        <fullName evidence="7">Protein ALTERED DEVELOPMENT PROGRAM 1</fullName>
        <shortName evidence="7">Protein ADP1</shortName>
    </alternativeName>
    <alternativeName>
        <fullName evidence="9">Protein NOVEL ION CARRIER 4</fullName>
        <shortName evidence="9">Protein NIC4</shortName>
    </alternativeName>
</protein>
<comment type="function">
    <text evidence="2 3 4">Functions as a multidrug and toxin extrusion transporter that negatively regulates plant disease resistance (PubMed:21762165). Plays an important role in maintaining normal plant architecture, possibly by regulating local auxin biosynthesis (PubMed:24391508). May act as a negative regulator of hypocotyl cell elongation in the light (PubMed:26160579).</text>
</comment>
<comment type="subcellular location">
    <subcellularLocation>
        <location evidence="3">Endosome membrane</location>
        <topology evidence="3">Multi-pass membrane protein</topology>
    </subcellularLocation>
    <subcellularLocation>
        <location evidence="4">Late endosome membrane</location>
        <topology evidence="4">Multi-pass membrane protein</topology>
    </subcellularLocation>
</comment>
<comment type="tissue specificity">
    <text evidence="3 4">Expressed in the meristematic regions. Mainly detected in tissues where cells were actively dividing, such as leaf primordia and young leaves, the junction between lateral root and the primary root, root cap, hydathodes, the junction between secondary inflorescence and the main inflorescence, young stamen and young siliques (PubMed:24391508). Highly expressed at the junction between the hypocotyl and the root, and at the marginal areas of cotyledons and true leaves, coinciding with the locations of the hydathode. Also highly expressed at the basal regions of the newly emerged lateral roots. In the floral organs, mostly expressed at the style of the pistil (PubMed:26160579).</text>
</comment>
<comment type="disruption phenotype">
    <text evidence="2">Enhanced resistance to bacterial pathogen PstDC3000 in RNAi mutant.</text>
</comment>
<comment type="miscellaneous">
    <text evidence="4">Overexpression of DTX51 alters shoot developmental programs leading to a loss of apical dominance phenotype.</text>
</comment>
<comment type="similarity">
    <text evidence="10">Belongs to the multi antimicrobial extrusion (MATE) (TC 2.A.66.1) family.</text>
</comment>
<sequence length="532" mass="57054">MCNPSTTTTTTGSENQESRTGLFLDLFSINSFEPTKRNLRHCENRGSPLMAEAVTEAKSLFTLAFPIAVTALVLYLRSAVSMFFLGQLGDLELAAGSLAIAFANITGYSVLSGLALGMEPLCSQAFGAHRFKLLSLTLHRTVVFLLVCCVPISVLWFNVGKISVYLHQDPDIAKLAQTYLIFSLPDLLTNTLLHPIRIYLRAQGIIHPVTLASLSGAVFHLPANLFLVSYLRLGLTGVAVASSITNIFVVAFLVCYVWASGLHAPTWTDPTRDCFRGWAPLLRLAGPSCVSVCLEWWWYEIMIVLCGLLVNPRSTVAAMGVLIQTTSFLYVFPSSLSFAVSTRVGNELGANRPKTAKLTATVAIVFAAVTGIIAAAFAYSVRNAWGRIFTGDKEILQLTAAALPILGLCEIGNCPQTVGCGVVRGTARPSTAANVNLGAFYLVGMPVAVGLGFWAGIGFNGLWVGLLAAQISCAGLMMYVVGTTDWESEAKKAQTLTCAETVENDIIKAVVASTIDGECDEAEPLIRITVLY</sequence>
<name>DTX51_ARATH</name>
<accession>Q9SZE2</accession>
<proteinExistence type="evidence at transcript level"/>
<reference key="1">
    <citation type="submission" date="2002-03" db="EMBL/GenBank/DDBJ databases">
        <title>Four membrane transport proteins of the Arabidopsis MATE-family influence the Na(+) and Li(+) tolerance in yeast.</title>
        <authorList>
            <person name="Pellengahr K."/>
            <person name="Poree F."/>
            <person name="Dolniak B."/>
            <person name="Kursawe M."/>
            <person name="Mueller-Roeber B."/>
        </authorList>
    </citation>
    <scope>NUCLEOTIDE SEQUENCE [MRNA]</scope>
</reference>
<reference key="2">
    <citation type="journal article" date="1999" name="Nature">
        <title>Sequence and analysis of chromosome 4 of the plant Arabidopsis thaliana.</title>
        <authorList>
            <person name="Mayer K.F.X."/>
            <person name="Schueller C."/>
            <person name="Wambutt R."/>
            <person name="Murphy G."/>
            <person name="Volckaert G."/>
            <person name="Pohl T."/>
            <person name="Duesterhoeft A."/>
            <person name="Stiekema W."/>
            <person name="Entian K.-D."/>
            <person name="Terryn N."/>
            <person name="Harris B."/>
            <person name="Ansorge W."/>
            <person name="Brandt P."/>
            <person name="Grivell L.A."/>
            <person name="Rieger M."/>
            <person name="Weichselgartner M."/>
            <person name="de Simone V."/>
            <person name="Obermaier B."/>
            <person name="Mache R."/>
            <person name="Mueller M."/>
            <person name="Kreis M."/>
            <person name="Delseny M."/>
            <person name="Puigdomenech P."/>
            <person name="Watson M."/>
            <person name="Schmidtheini T."/>
            <person name="Reichert B."/>
            <person name="Portetelle D."/>
            <person name="Perez-Alonso M."/>
            <person name="Boutry M."/>
            <person name="Bancroft I."/>
            <person name="Vos P."/>
            <person name="Hoheisel J."/>
            <person name="Zimmermann W."/>
            <person name="Wedler H."/>
            <person name="Ridley P."/>
            <person name="Langham S.-A."/>
            <person name="McCullagh B."/>
            <person name="Bilham L."/>
            <person name="Robben J."/>
            <person name="van der Schueren J."/>
            <person name="Grymonprez B."/>
            <person name="Chuang Y.-J."/>
            <person name="Vandenbussche F."/>
            <person name="Braeken M."/>
            <person name="Weltjens I."/>
            <person name="Voet M."/>
            <person name="Bastiaens I."/>
            <person name="Aert R."/>
            <person name="Defoor E."/>
            <person name="Weitzenegger T."/>
            <person name="Bothe G."/>
            <person name="Ramsperger U."/>
            <person name="Hilbert H."/>
            <person name="Braun M."/>
            <person name="Holzer E."/>
            <person name="Brandt A."/>
            <person name="Peters S."/>
            <person name="van Staveren M."/>
            <person name="Dirkse W."/>
            <person name="Mooijman P."/>
            <person name="Klein Lankhorst R."/>
            <person name="Rose M."/>
            <person name="Hauf J."/>
            <person name="Koetter P."/>
            <person name="Berneiser S."/>
            <person name="Hempel S."/>
            <person name="Feldpausch M."/>
            <person name="Lamberth S."/>
            <person name="Van den Daele H."/>
            <person name="De Keyser A."/>
            <person name="Buysshaert C."/>
            <person name="Gielen J."/>
            <person name="Villarroel R."/>
            <person name="De Clercq R."/>
            <person name="van Montagu M."/>
            <person name="Rogers J."/>
            <person name="Cronin A."/>
            <person name="Quail M.A."/>
            <person name="Bray-Allen S."/>
            <person name="Clark L."/>
            <person name="Doggett J."/>
            <person name="Hall S."/>
            <person name="Kay M."/>
            <person name="Lennard N."/>
            <person name="McLay K."/>
            <person name="Mayes R."/>
            <person name="Pettett A."/>
            <person name="Rajandream M.A."/>
            <person name="Lyne M."/>
            <person name="Benes V."/>
            <person name="Rechmann S."/>
            <person name="Borkova D."/>
            <person name="Bloecker H."/>
            <person name="Scharfe M."/>
            <person name="Grimm M."/>
            <person name="Loehnert T.-H."/>
            <person name="Dose S."/>
            <person name="de Haan M."/>
            <person name="Maarse A.C."/>
            <person name="Schaefer M."/>
            <person name="Mueller-Auer S."/>
            <person name="Gabel C."/>
            <person name="Fuchs M."/>
            <person name="Fartmann B."/>
            <person name="Granderath K."/>
            <person name="Dauner D."/>
            <person name="Herzl A."/>
            <person name="Neumann S."/>
            <person name="Argiriou A."/>
            <person name="Vitale D."/>
            <person name="Liguori R."/>
            <person name="Piravandi E."/>
            <person name="Massenet O."/>
            <person name="Quigley F."/>
            <person name="Clabauld G."/>
            <person name="Muendlein A."/>
            <person name="Felber R."/>
            <person name="Schnabl S."/>
            <person name="Hiller R."/>
            <person name="Schmidt W."/>
            <person name="Lecharny A."/>
            <person name="Aubourg S."/>
            <person name="Chefdor F."/>
            <person name="Cooke R."/>
            <person name="Berger C."/>
            <person name="Monfort A."/>
            <person name="Casacuberta E."/>
            <person name="Gibbons T."/>
            <person name="Weber N."/>
            <person name="Vandenbol M."/>
            <person name="Bargues M."/>
            <person name="Terol J."/>
            <person name="Torres A."/>
            <person name="Perez-Perez A."/>
            <person name="Purnelle B."/>
            <person name="Bent E."/>
            <person name="Johnson S."/>
            <person name="Tacon D."/>
            <person name="Jesse T."/>
            <person name="Heijnen L."/>
            <person name="Schwarz S."/>
            <person name="Scholler P."/>
            <person name="Heber S."/>
            <person name="Francs P."/>
            <person name="Bielke C."/>
            <person name="Frishman D."/>
            <person name="Haase D."/>
            <person name="Lemcke K."/>
            <person name="Mewes H.-W."/>
            <person name="Stocker S."/>
            <person name="Zaccaria P."/>
            <person name="Bevan M."/>
            <person name="Wilson R.K."/>
            <person name="de la Bastide M."/>
            <person name="Habermann K."/>
            <person name="Parnell L."/>
            <person name="Dedhia N."/>
            <person name="Gnoj L."/>
            <person name="Schutz K."/>
            <person name="Huang E."/>
            <person name="Spiegel L."/>
            <person name="Sekhon M."/>
            <person name="Murray J."/>
            <person name="Sheet P."/>
            <person name="Cordes M."/>
            <person name="Abu-Threideh J."/>
            <person name="Stoneking T."/>
            <person name="Kalicki J."/>
            <person name="Graves T."/>
            <person name="Harmon G."/>
            <person name="Edwards J."/>
            <person name="Latreille P."/>
            <person name="Courtney L."/>
            <person name="Cloud J."/>
            <person name="Abbott A."/>
            <person name="Scott K."/>
            <person name="Johnson D."/>
            <person name="Minx P."/>
            <person name="Bentley D."/>
            <person name="Fulton B."/>
            <person name="Miller N."/>
            <person name="Greco T."/>
            <person name="Kemp K."/>
            <person name="Kramer J."/>
            <person name="Fulton L."/>
            <person name="Mardis E."/>
            <person name="Dante M."/>
            <person name="Pepin K."/>
            <person name="Hillier L.W."/>
            <person name="Nelson J."/>
            <person name="Spieth J."/>
            <person name="Ryan E."/>
            <person name="Andrews S."/>
            <person name="Geisel C."/>
            <person name="Layman D."/>
            <person name="Du H."/>
            <person name="Ali J."/>
            <person name="Berghoff A."/>
            <person name="Jones K."/>
            <person name="Drone K."/>
            <person name="Cotton M."/>
            <person name="Joshu C."/>
            <person name="Antonoiu B."/>
            <person name="Zidanic M."/>
            <person name="Strong C."/>
            <person name="Sun H."/>
            <person name="Lamar B."/>
            <person name="Yordan C."/>
            <person name="Ma P."/>
            <person name="Zhong J."/>
            <person name="Preston R."/>
            <person name="Vil D."/>
            <person name="Shekher M."/>
            <person name="Matero A."/>
            <person name="Shah R."/>
            <person name="Swaby I.K."/>
            <person name="O'Shaughnessy A."/>
            <person name="Rodriguez M."/>
            <person name="Hoffman J."/>
            <person name="Till S."/>
            <person name="Granat S."/>
            <person name="Shohdy N."/>
            <person name="Hasegawa A."/>
            <person name="Hameed A."/>
            <person name="Lodhi M."/>
            <person name="Johnson A."/>
            <person name="Chen E."/>
            <person name="Marra M.A."/>
            <person name="Martienssen R."/>
            <person name="McCombie W.R."/>
        </authorList>
    </citation>
    <scope>NUCLEOTIDE SEQUENCE [LARGE SCALE GENOMIC DNA]</scope>
    <source>
        <strain>cv. Columbia</strain>
    </source>
</reference>
<reference key="3">
    <citation type="journal article" date="2017" name="Plant J.">
        <title>Araport11: a complete reannotation of the Arabidopsis thaliana reference genome.</title>
        <authorList>
            <person name="Cheng C.Y."/>
            <person name="Krishnakumar V."/>
            <person name="Chan A.P."/>
            <person name="Thibaud-Nissen F."/>
            <person name="Schobel S."/>
            <person name="Town C.D."/>
        </authorList>
    </citation>
    <scope>GENOME REANNOTATION</scope>
    <source>
        <strain>cv. Columbia</strain>
    </source>
</reference>
<reference key="4">
    <citation type="journal article" date="2002" name="J. Biol. Chem.">
        <title>Functional cloning and characterization of a plant efflux carrier for multidrug and heavy metal detoxification.</title>
        <authorList>
            <person name="Li L."/>
            <person name="He Z."/>
            <person name="Pandey G.K."/>
            <person name="Tsuchiya T."/>
            <person name="Luan S."/>
        </authorList>
    </citation>
    <scope>GENE FAMILY</scope>
    <scope>NOMENCLATURE</scope>
</reference>
<reference key="5">
    <citation type="journal article" date="2003" name="Eur. J. Biochem.">
        <title>The multidrug/oligosaccharidyl-lipid/polysaccharide (MOP) exporter superfamily.</title>
        <authorList>
            <person name="Hvorup R.N."/>
            <person name="Winnen B."/>
            <person name="Chang A.B."/>
            <person name="Jiang Y."/>
            <person name="Zhou X.F."/>
            <person name="Saier M.H. Jr."/>
        </authorList>
    </citation>
    <scope>GENE FAMILY</scope>
</reference>
<reference key="6">
    <citation type="journal article" date="2011" name="New Phytol.">
        <title>ADS1 encodes a MATE-transporter that negatively regulates plant disease resistance.</title>
        <authorList>
            <person name="Sun X."/>
            <person name="Gilroy E.M."/>
            <person name="Chini A."/>
            <person name="Nurmberg P.L."/>
            <person name="Hein I."/>
            <person name="Lacomme C."/>
            <person name="Birch P.R."/>
            <person name="Hussain A."/>
            <person name="Yun B.W."/>
            <person name="Loake G.J."/>
        </authorList>
    </citation>
    <scope>FUNCTION</scope>
    <scope>DISRUPTION PHENOTYPE</scope>
</reference>
<reference key="7">
    <citation type="journal article" date="2014" name="PLoS Genet.">
        <title>ADP1 affects plant architecture by regulating local auxin biosynthesis.</title>
        <authorList>
            <person name="Li R."/>
            <person name="Li J."/>
            <person name="Li S."/>
            <person name="Qin G."/>
            <person name="Novak O."/>
            <person name="Pencik A."/>
            <person name="Ljung K."/>
            <person name="Aoyama T."/>
            <person name="Liu J."/>
            <person name="Murphy A."/>
            <person name="Gu H."/>
            <person name="Tsuge T."/>
            <person name="Qu L.J."/>
        </authorList>
    </citation>
    <scope>FUNCTION</scope>
    <scope>TISSUE SPECIFICITY</scope>
    <scope>SUBCELLULAR LOCATION</scope>
</reference>
<reference key="8">
    <citation type="journal article" date="2015" name="J. Exp. Bot.">
        <title>A subgroup of MATE transporter genes regulates hypocotyl cell elongation in Arabidopsis.</title>
        <authorList>
            <person name="Wang R."/>
            <person name="Liu X."/>
            <person name="Liang S."/>
            <person name="Ge Q."/>
            <person name="Li Y."/>
            <person name="Shao J."/>
            <person name="Qi Y."/>
            <person name="An L."/>
            <person name="Yu F."/>
        </authorList>
    </citation>
    <scope>TISSUE SPECIFICITY</scope>
    <scope>SUBCELLULAR LOCATION</scope>
    <scope>FUNCTION</scope>
</reference>
<keyword id="KW-0967">Endosome</keyword>
<keyword id="KW-0472">Membrane</keyword>
<keyword id="KW-0611">Plant defense</keyword>
<keyword id="KW-1185">Reference proteome</keyword>
<keyword id="KW-0812">Transmembrane</keyword>
<keyword id="KW-1133">Transmembrane helix</keyword>
<keyword id="KW-0813">Transport</keyword>
<dbReference type="EMBL" id="AY082797">
    <property type="protein sequence ID" value="AAM03452.1"/>
    <property type="molecule type" value="mRNA"/>
</dbReference>
<dbReference type="EMBL" id="AL078470">
    <property type="protein sequence ID" value="CAB43928.1"/>
    <property type="molecule type" value="Genomic_DNA"/>
</dbReference>
<dbReference type="EMBL" id="AL161574">
    <property type="protein sequence ID" value="CAB79672.1"/>
    <property type="molecule type" value="Genomic_DNA"/>
</dbReference>
<dbReference type="EMBL" id="CP002687">
    <property type="protein sequence ID" value="AEE85591.1"/>
    <property type="molecule type" value="Genomic_DNA"/>
</dbReference>
<dbReference type="PIR" id="T08969">
    <property type="entry name" value="T08969"/>
</dbReference>
<dbReference type="RefSeq" id="NP_194643.1">
    <property type="nucleotide sequence ID" value="NM_119058.3"/>
</dbReference>
<dbReference type="SMR" id="Q9SZE2"/>
<dbReference type="FunCoup" id="Q9SZE2">
    <property type="interactions" value="10"/>
</dbReference>
<dbReference type="IntAct" id="Q9SZE2">
    <property type="interactions" value="15"/>
</dbReference>
<dbReference type="STRING" id="3702.Q9SZE2"/>
<dbReference type="TCDB" id="2.A.66.1.59">
    <property type="family name" value="the multidrug/oligosaccharidyl-lipid/polysaccharide (mop) flippase superfamily"/>
</dbReference>
<dbReference type="PaxDb" id="3702-AT4G29140.1"/>
<dbReference type="ProteomicsDB" id="221885"/>
<dbReference type="EnsemblPlants" id="AT4G29140.1">
    <property type="protein sequence ID" value="AT4G29140.1"/>
    <property type="gene ID" value="AT4G29140"/>
</dbReference>
<dbReference type="GeneID" id="829035"/>
<dbReference type="Gramene" id="AT4G29140.1">
    <property type="protein sequence ID" value="AT4G29140.1"/>
    <property type="gene ID" value="AT4G29140"/>
</dbReference>
<dbReference type="KEGG" id="ath:AT4G29140"/>
<dbReference type="Araport" id="AT4G29140"/>
<dbReference type="TAIR" id="AT4G29140">
    <property type="gene designation" value="ADS1"/>
</dbReference>
<dbReference type="eggNOG" id="KOG1347">
    <property type="taxonomic scope" value="Eukaryota"/>
</dbReference>
<dbReference type="HOGENOM" id="CLU_012893_1_0_1"/>
<dbReference type="InParanoid" id="Q9SZE2"/>
<dbReference type="OMA" id="AHLYVMA"/>
<dbReference type="PhylomeDB" id="Q9SZE2"/>
<dbReference type="PRO" id="PR:Q9SZE2"/>
<dbReference type="Proteomes" id="UP000006548">
    <property type="component" value="Chromosome 4"/>
</dbReference>
<dbReference type="ExpressionAtlas" id="Q9SZE2">
    <property type="expression patterns" value="baseline and differential"/>
</dbReference>
<dbReference type="GO" id="GO:0010008">
    <property type="term" value="C:endosome membrane"/>
    <property type="evidence" value="ECO:0000314"/>
    <property type="project" value="UniProtKB"/>
</dbReference>
<dbReference type="GO" id="GO:0005770">
    <property type="term" value="C:late endosome"/>
    <property type="evidence" value="ECO:0000314"/>
    <property type="project" value="UniProtKB"/>
</dbReference>
<dbReference type="GO" id="GO:0031902">
    <property type="term" value="C:late endosome membrane"/>
    <property type="evidence" value="ECO:0007669"/>
    <property type="project" value="UniProtKB-SubCell"/>
</dbReference>
<dbReference type="GO" id="GO:0015297">
    <property type="term" value="F:antiporter activity"/>
    <property type="evidence" value="ECO:0007669"/>
    <property type="project" value="InterPro"/>
</dbReference>
<dbReference type="GO" id="GO:0042910">
    <property type="term" value="F:xenobiotic transmembrane transporter activity"/>
    <property type="evidence" value="ECO:0007669"/>
    <property type="project" value="InterPro"/>
</dbReference>
<dbReference type="GO" id="GO:0006952">
    <property type="term" value="P:defense response"/>
    <property type="evidence" value="ECO:0007669"/>
    <property type="project" value="UniProtKB-KW"/>
</dbReference>
<dbReference type="GO" id="GO:0031348">
    <property type="term" value="P:negative regulation of defense response"/>
    <property type="evidence" value="ECO:0000315"/>
    <property type="project" value="TAIR"/>
</dbReference>
<dbReference type="GO" id="GO:0010600">
    <property type="term" value="P:regulation of auxin biosynthetic process"/>
    <property type="evidence" value="ECO:0000315"/>
    <property type="project" value="UniProtKB"/>
</dbReference>
<dbReference type="GO" id="GO:0046620">
    <property type="term" value="P:regulation of organ growth"/>
    <property type="evidence" value="ECO:0000315"/>
    <property type="project" value="UniProtKB"/>
</dbReference>
<dbReference type="GO" id="GO:0010015">
    <property type="term" value="P:root morphogenesis"/>
    <property type="evidence" value="ECO:0000315"/>
    <property type="project" value="UniProtKB"/>
</dbReference>
<dbReference type="GO" id="GO:1990961">
    <property type="term" value="P:xenobiotic detoxification by transmembrane export across the plasma membrane"/>
    <property type="evidence" value="ECO:0007669"/>
    <property type="project" value="InterPro"/>
</dbReference>
<dbReference type="CDD" id="cd13132">
    <property type="entry name" value="MATE_eukaryotic"/>
    <property type="match status" value="1"/>
</dbReference>
<dbReference type="InterPro" id="IPR045069">
    <property type="entry name" value="MATE_euk"/>
</dbReference>
<dbReference type="InterPro" id="IPR002528">
    <property type="entry name" value="MATE_fam"/>
</dbReference>
<dbReference type="NCBIfam" id="TIGR00797">
    <property type="entry name" value="matE"/>
    <property type="match status" value="1"/>
</dbReference>
<dbReference type="PANTHER" id="PTHR11206">
    <property type="entry name" value="MULTIDRUG RESISTANCE PROTEIN"/>
    <property type="match status" value="1"/>
</dbReference>
<dbReference type="Pfam" id="PF01554">
    <property type="entry name" value="MatE"/>
    <property type="match status" value="2"/>
</dbReference>
<evidence type="ECO:0000255" key="1"/>
<evidence type="ECO:0000269" key="2">
    <source>
    </source>
</evidence>
<evidence type="ECO:0000269" key="3">
    <source>
    </source>
</evidence>
<evidence type="ECO:0000269" key="4">
    <source>
    </source>
</evidence>
<evidence type="ECO:0000303" key="5">
    <source>
    </source>
</evidence>
<evidence type="ECO:0000303" key="6">
    <source>
    </source>
</evidence>
<evidence type="ECO:0000303" key="7">
    <source>
    </source>
</evidence>
<evidence type="ECO:0000303" key="8">
    <source>
    </source>
</evidence>
<evidence type="ECO:0000303" key="9">
    <source ref="1"/>
</evidence>
<evidence type="ECO:0000305" key="10"/>
<evidence type="ECO:0000312" key="11">
    <source>
        <dbReference type="Araport" id="AT4G29140"/>
    </source>
</evidence>
<evidence type="ECO:0000312" key="12">
    <source>
        <dbReference type="EMBL" id="AAM03452.1"/>
    </source>
</evidence>
<evidence type="ECO:0000312" key="13">
    <source>
        <dbReference type="EMBL" id="CAB43928.1"/>
    </source>
</evidence>
<organism>
    <name type="scientific">Arabidopsis thaliana</name>
    <name type="common">Mouse-ear cress</name>
    <dbReference type="NCBI Taxonomy" id="3702"/>
    <lineage>
        <taxon>Eukaryota</taxon>
        <taxon>Viridiplantae</taxon>
        <taxon>Streptophyta</taxon>
        <taxon>Embryophyta</taxon>
        <taxon>Tracheophyta</taxon>
        <taxon>Spermatophyta</taxon>
        <taxon>Magnoliopsida</taxon>
        <taxon>eudicotyledons</taxon>
        <taxon>Gunneridae</taxon>
        <taxon>Pentapetalae</taxon>
        <taxon>rosids</taxon>
        <taxon>malvids</taxon>
        <taxon>Brassicales</taxon>
        <taxon>Brassicaceae</taxon>
        <taxon>Camelineae</taxon>
        <taxon>Arabidopsis</taxon>
    </lineage>
</organism>
<feature type="chain" id="PRO_0000434085" description="Protein DETOXIFICATION 51">
    <location>
        <begin position="1"/>
        <end position="532"/>
    </location>
</feature>
<feature type="transmembrane region" description="Helical" evidence="1">
    <location>
        <begin position="65"/>
        <end position="85"/>
    </location>
</feature>
<feature type="transmembrane region" description="Helical" evidence="1">
    <location>
        <begin position="98"/>
        <end position="118"/>
    </location>
</feature>
<feature type="transmembrane region" description="Helical" evidence="1">
    <location>
        <begin position="142"/>
        <end position="162"/>
    </location>
</feature>
<feature type="transmembrane region" description="Helical" evidence="10">
    <location>
        <begin position="176"/>
        <end position="196"/>
    </location>
</feature>
<feature type="transmembrane region" description="Helical" evidence="1">
    <location>
        <begin position="208"/>
        <end position="228"/>
    </location>
</feature>
<feature type="transmembrane region" description="Helical" evidence="1">
    <location>
        <begin position="238"/>
        <end position="258"/>
    </location>
</feature>
<feature type="transmembrane region" description="Helical" evidence="1">
    <location>
        <begin position="290"/>
        <end position="310"/>
    </location>
</feature>
<feature type="transmembrane region" description="Helical" evidence="1">
    <location>
        <begin position="316"/>
        <end position="336"/>
    </location>
</feature>
<feature type="transmembrane region" description="Helical" evidence="1">
    <location>
        <begin position="358"/>
        <end position="378"/>
    </location>
</feature>
<feature type="transmembrane region" description="Helical" evidence="1">
    <location>
        <begin position="395"/>
        <end position="415"/>
    </location>
</feature>
<feature type="transmembrane region" description="Helical" evidence="1">
    <location>
        <begin position="439"/>
        <end position="459"/>
    </location>
</feature>
<feature type="transmembrane region" description="Helical" evidence="1">
    <location>
        <begin position="461"/>
        <end position="481"/>
    </location>
</feature>